<evidence type="ECO:0000250" key="1">
    <source>
        <dbReference type="UniProtKB" id="P09455"/>
    </source>
</evidence>
<evidence type="ECO:0000269" key="2">
    <source>
    </source>
</evidence>
<evidence type="ECO:0000269" key="3">
    <source>
    </source>
</evidence>
<evidence type="ECO:0000269" key="4">
    <source>
    </source>
</evidence>
<evidence type="ECO:0000269" key="5">
    <source>
    </source>
</evidence>
<evidence type="ECO:0000305" key="6"/>
<proteinExistence type="evidence at protein level"/>
<sequence length="135" mass="15846">MPVDFNGYWKMLSNENFEEYLRALDVNVALRKIANLLKPDKEIVQDGDHMIIRTLSTFRNYIMDFQVGKEFEEDLTGIDDRKCMTTVSWDGDKLQCVQKGEKEGRGWTQWIEGDELHLEMRAEGVICKQVFKKVH</sequence>
<reference key="1">
    <citation type="journal article" date="1991" name="EMBO J.">
        <title>A retinoic acid response element is present in the mouse cellular retinol binding protein I (mCRBPI) promoter.</title>
        <authorList>
            <person name="Smith W.C."/>
            <person name="Nakshatri H."/>
            <person name="Leroy P."/>
            <person name="Rees J."/>
            <person name="Chambon P."/>
        </authorList>
    </citation>
    <scope>NUCLEOTIDE SEQUENCE [MRNA]</scope>
    <source>
        <tissue>Testis</tissue>
    </source>
</reference>
<reference key="2">
    <citation type="journal article" date="2004" name="Genome Res.">
        <title>The status, quality, and expansion of the NIH full-length cDNA project: the Mammalian Gene Collection (MGC).</title>
        <authorList>
            <consortium name="The MGC Project Team"/>
        </authorList>
    </citation>
    <scope>NUCLEOTIDE SEQUENCE [LARGE SCALE MRNA]</scope>
    <source>
        <strain>FVB/N</strain>
        <tissue>Mammary gland</tissue>
    </source>
</reference>
<reference key="3">
    <citation type="journal article" date="1999" name="EMBO J.">
        <title>Cellular retinol-binding protein I is essential for vitamin A homeostasis.</title>
        <authorList>
            <person name="Ghyselinck N.B."/>
            <person name="Baavik C."/>
            <person name="Sapin V."/>
            <person name="Mark M."/>
            <person name="Bonnier D."/>
            <person name="Hindelang C."/>
            <person name="Dierich A."/>
            <person name="Nilsson C.B."/>
            <person name="Haakansson H."/>
            <person name="Sauvant P."/>
            <person name="Azais-Braesco V."/>
            <person name="Frasson M."/>
            <person name="Picaud S."/>
            <person name="Chambon P."/>
        </authorList>
    </citation>
    <scope>DISRUPTION PHENOTYPE</scope>
    <scope>SUBCELLULAR LOCATION</scope>
</reference>
<reference key="4">
    <citation type="journal article" date="2005" name="J. Natl. Cancer Inst.">
        <title>Cellular retinol-binding protein I, a regulator of breast epithelial retinoic acid receptor activity, cell differentiation, and tumorigenicity.</title>
        <authorList>
            <person name="Farias E.F."/>
            <person name="Ong D.E."/>
            <person name="Ghyselinck N.B."/>
            <person name="Nakajo S."/>
            <person name="Kuppumbatti Y.S."/>
            <person name="Mira y Lopez R."/>
        </authorList>
    </citation>
    <scope>FUNCTION</scope>
    <scope>SUBCELLULAR LOCATION</scope>
</reference>
<reference key="5">
    <citation type="journal article" date="2010" name="Cell">
        <title>A tissue-specific atlas of mouse protein phosphorylation and expression.</title>
        <authorList>
            <person name="Huttlin E.L."/>
            <person name="Jedrychowski M.P."/>
            <person name="Elias J.E."/>
            <person name="Goswami T."/>
            <person name="Rad R."/>
            <person name="Beausoleil S.A."/>
            <person name="Villen J."/>
            <person name="Haas W."/>
            <person name="Sowa M.E."/>
            <person name="Gygi S.P."/>
        </authorList>
    </citation>
    <scope>IDENTIFICATION BY MASS SPECTROMETRY [LARGE SCALE ANALYSIS]</scope>
    <source>
        <tissue>Brain</tissue>
        <tissue>Heart</tissue>
        <tissue>Kidney</tissue>
        <tissue>Liver</tissue>
        <tissue>Lung</tissue>
        <tissue>Pancreas</tissue>
        <tissue>Spleen</tissue>
        <tissue>Testis</tissue>
    </source>
</reference>
<reference key="6">
    <citation type="journal article" date="2012" name="Mol. Cell. Biol.">
        <title>Cross talk between signaling and vitamin A transport by the retinol-binding protein receptor STRA6.</title>
        <authorList>
            <person name="Berry D.C."/>
            <person name="O'Byrne S.M."/>
            <person name="Vreeland A.C."/>
            <person name="Blaner W.S."/>
            <person name="Noy N."/>
        </authorList>
    </citation>
    <scope>FUNCTION</scope>
</reference>
<reference key="7">
    <citation type="journal article" date="2015" name="PLoS Genet.">
        <title>9-cis-13,14-Dihydroretinoic Acid Is an Endogenous Retinoid Acting as RXR Ligand in Mice.</title>
        <authorList>
            <person name="Ruehl R."/>
            <person name="Krzyzosiak A."/>
            <person name="Niewiadomska-Cimicka A."/>
            <person name="Rochel N."/>
            <person name="Szeles L."/>
            <person name="Vaz B."/>
            <person name="Wietrzych-Schindler M."/>
            <person name="Alvarez S."/>
            <person name="Szklenar M."/>
            <person name="Nagy L."/>
            <person name="de Lera A.R."/>
            <person name="Krezel W."/>
        </authorList>
    </citation>
    <scope>DISRUPTION PHENOTYPE</scope>
</reference>
<feature type="chain" id="PRO_0000067393" description="Retinol-binding protein 1">
    <location>
        <begin position="1"/>
        <end position="135"/>
    </location>
</feature>
<feature type="region of interest" description="Important for interaction with STRA6" evidence="1">
    <location>
        <begin position="22"/>
        <end position="32"/>
    </location>
</feature>
<feature type="binding site" evidence="1">
    <location>
        <position position="41"/>
    </location>
    <ligand>
        <name>all-trans-retinol</name>
        <dbReference type="ChEBI" id="CHEBI:17336"/>
    </ligand>
</feature>
<feature type="binding site" evidence="1">
    <location>
        <position position="63"/>
    </location>
    <ligand>
        <name>all-trans-retinol</name>
        <dbReference type="ChEBI" id="CHEBI:17336"/>
    </ligand>
</feature>
<feature type="binding site" evidence="1">
    <location>
        <position position="109"/>
    </location>
    <ligand>
        <name>all-trans-retinol</name>
        <dbReference type="ChEBI" id="CHEBI:17336"/>
    </ligand>
</feature>
<accession>Q00915</accession>
<dbReference type="EMBL" id="X60367">
    <property type="protein sequence ID" value="CAA42919.1"/>
    <property type="molecule type" value="mRNA"/>
</dbReference>
<dbReference type="EMBL" id="BC018254">
    <property type="protein sequence ID" value="AAH18254.1"/>
    <property type="molecule type" value="mRNA"/>
</dbReference>
<dbReference type="CCDS" id="CCDS23424.1"/>
<dbReference type="PIR" id="S16355">
    <property type="entry name" value="S16355"/>
</dbReference>
<dbReference type="RefSeq" id="NP_035384.1">
    <property type="nucleotide sequence ID" value="NM_011254.5"/>
</dbReference>
<dbReference type="BMRB" id="Q00915"/>
<dbReference type="SMR" id="Q00915"/>
<dbReference type="BioGRID" id="202827">
    <property type="interactions" value="1"/>
</dbReference>
<dbReference type="CORUM" id="Q00915"/>
<dbReference type="FunCoup" id="Q00915">
    <property type="interactions" value="775"/>
</dbReference>
<dbReference type="STRING" id="10090.ENSMUSP00000059749"/>
<dbReference type="iPTMnet" id="Q00915"/>
<dbReference type="PhosphoSitePlus" id="Q00915"/>
<dbReference type="SwissPalm" id="Q00915"/>
<dbReference type="REPRODUCTION-2DPAGE" id="Q00915"/>
<dbReference type="jPOST" id="Q00915"/>
<dbReference type="PaxDb" id="10090-ENSMUSP00000059749"/>
<dbReference type="PeptideAtlas" id="Q00915"/>
<dbReference type="ProteomicsDB" id="253214"/>
<dbReference type="Pumba" id="Q00915"/>
<dbReference type="Antibodypedia" id="17981">
    <property type="antibodies" value="506 antibodies from 35 providers"/>
</dbReference>
<dbReference type="DNASU" id="19659"/>
<dbReference type="Ensembl" id="ENSMUST00000052068.11">
    <property type="protein sequence ID" value="ENSMUSP00000059749.10"/>
    <property type="gene ID" value="ENSMUSG00000046402.11"/>
</dbReference>
<dbReference type="GeneID" id="19659"/>
<dbReference type="KEGG" id="mmu:19659"/>
<dbReference type="UCSC" id="uc009rdj.1">
    <property type="organism name" value="mouse"/>
</dbReference>
<dbReference type="AGR" id="MGI:97876"/>
<dbReference type="CTD" id="5947"/>
<dbReference type="MGI" id="MGI:97876">
    <property type="gene designation" value="Rbp1"/>
</dbReference>
<dbReference type="VEuPathDB" id="HostDB:ENSMUSG00000046402"/>
<dbReference type="eggNOG" id="KOG4015">
    <property type="taxonomic scope" value="Eukaryota"/>
</dbReference>
<dbReference type="GeneTree" id="ENSGT00940000159675"/>
<dbReference type="HOGENOM" id="CLU_113772_5_1_1"/>
<dbReference type="InParanoid" id="Q00915"/>
<dbReference type="OMA" id="DRKCMTC"/>
<dbReference type="OrthoDB" id="354351at2759"/>
<dbReference type="PhylomeDB" id="Q00915"/>
<dbReference type="TreeFam" id="TF316894"/>
<dbReference type="Reactome" id="R-MMU-2453902">
    <property type="pathway name" value="The canonical retinoid cycle in rods (twilight vision)"/>
</dbReference>
<dbReference type="Reactome" id="R-MMU-975634">
    <property type="pathway name" value="Retinoid metabolism and transport"/>
</dbReference>
<dbReference type="BioGRID-ORCS" id="19659">
    <property type="hits" value="2 hits in 79 CRISPR screens"/>
</dbReference>
<dbReference type="ChiTaRS" id="Rbp1">
    <property type="organism name" value="mouse"/>
</dbReference>
<dbReference type="PRO" id="PR:Q00915"/>
<dbReference type="Proteomes" id="UP000000589">
    <property type="component" value="Chromosome 9"/>
</dbReference>
<dbReference type="RNAct" id="Q00915">
    <property type="molecule type" value="protein"/>
</dbReference>
<dbReference type="Bgee" id="ENSMUSG00000046402">
    <property type="expression patterns" value="Expressed in choroid plexus of fourth ventricle and 289 other cell types or tissues"/>
</dbReference>
<dbReference type="ExpressionAtlas" id="Q00915">
    <property type="expression patterns" value="baseline and differential"/>
</dbReference>
<dbReference type="GO" id="GO:0005829">
    <property type="term" value="C:cytosol"/>
    <property type="evidence" value="ECO:0007669"/>
    <property type="project" value="Ensembl"/>
</dbReference>
<dbReference type="GO" id="GO:0005811">
    <property type="term" value="C:lipid droplet"/>
    <property type="evidence" value="ECO:0000314"/>
    <property type="project" value="UniProtKB"/>
</dbReference>
<dbReference type="GO" id="GO:0005654">
    <property type="term" value="C:nucleoplasm"/>
    <property type="evidence" value="ECO:0007669"/>
    <property type="project" value="Ensembl"/>
</dbReference>
<dbReference type="GO" id="GO:1904768">
    <property type="term" value="F:all-trans-retinol binding"/>
    <property type="evidence" value="ECO:0000314"/>
    <property type="project" value="MGI"/>
</dbReference>
<dbReference type="GO" id="GO:0016918">
    <property type="term" value="F:retinal binding"/>
    <property type="evidence" value="ECO:0007669"/>
    <property type="project" value="UniProtKB-KW"/>
</dbReference>
<dbReference type="GO" id="GO:0005501">
    <property type="term" value="F:retinoid binding"/>
    <property type="evidence" value="ECO:0000304"/>
    <property type="project" value="MGI"/>
</dbReference>
<dbReference type="GO" id="GO:0055088">
    <property type="term" value="P:lipid homeostasis"/>
    <property type="evidence" value="ECO:0000250"/>
    <property type="project" value="UniProtKB"/>
</dbReference>
<dbReference type="GO" id="GO:0019915">
    <property type="term" value="P:lipid storage"/>
    <property type="evidence" value="ECO:0000315"/>
    <property type="project" value="MGI"/>
</dbReference>
<dbReference type="GO" id="GO:0030852">
    <property type="term" value="P:regulation of granulocyte differentiation"/>
    <property type="evidence" value="ECO:0000315"/>
    <property type="project" value="MGI"/>
</dbReference>
<dbReference type="GO" id="GO:0033189">
    <property type="term" value="P:response to vitamin A"/>
    <property type="evidence" value="ECO:0000315"/>
    <property type="project" value="MGI"/>
</dbReference>
<dbReference type="GO" id="GO:0002138">
    <property type="term" value="P:retinoic acid biosynthetic process"/>
    <property type="evidence" value="ECO:0007669"/>
    <property type="project" value="InterPro"/>
</dbReference>
<dbReference type="GO" id="GO:0042573">
    <property type="term" value="P:retinoic acid metabolic process"/>
    <property type="evidence" value="ECO:0000315"/>
    <property type="project" value="MGI"/>
</dbReference>
<dbReference type="GO" id="GO:0001523">
    <property type="term" value="P:retinoid metabolic process"/>
    <property type="evidence" value="ECO:0000315"/>
    <property type="project" value="MGI"/>
</dbReference>
<dbReference type="GO" id="GO:0042572">
    <property type="term" value="P:retinol metabolic process"/>
    <property type="evidence" value="ECO:0000315"/>
    <property type="project" value="MGI"/>
</dbReference>
<dbReference type="GO" id="GO:0006776">
    <property type="term" value="P:vitamin A metabolic process"/>
    <property type="evidence" value="ECO:0000250"/>
    <property type="project" value="UniProtKB"/>
</dbReference>
<dbReference type="CDD" id="cd19462">
    <property type="entry name" value="CRBP1"/>
    <property type="match status" value="1"/>
</dbReference>
<dbReference type="FunFam" id="2.40.128.20:FF:000001">
    <property type="entry name" value="Fatty acid-binding protein, adipocyte"/>
    <property type="match status" value="1"/>
</dbReference>
<dbReference type="Gene3D" id="2.40.128.20">
    <property type="match status" value="1"/>
</dbReference>
<dbReference type="InterPro" id="IPR012674">
    <property type="entry name" value="Calycin"/>
</dbReference>
<dbReference type="InterPro" id="IPR031264">
    <property type="entry name" value="CRBP1"/>
</dbReference>
<dbReference type="InterPro" id="IPR000463">
    <property type="entry name" value="Fatty_acid-bd"/>
</dbReference>
<dbReference type="InterPro" id="IPR031259">
    <property type="entry name" value="ILBP"/>
</dbReference>
<dbReference type="InterPro" id="IPR000566">
    <property type="entry name" value="Lipocln_cytosolic_FA-bd_dom"/>
</dbReference>
<dbReference type="PANTHER" id="PTHR11955">
    <property type="entry name" value="FATTY ACID BINDING PROTEIN"/>
    <property type="match status" value="1"/>
</dbReference>
<dbReference type="Pfam" id="PF00061">
    <property type="entry name" value="Lipocalin"/>
    <property type="match status" value="1"/>
</dbReference>
<dbReference type="PRINTS" id="PR00178">
    <property type="entry name" value="FATTYACIDBP"/>
</dbReference>
<dbReference type="SUPFAM" id="SSF50814">
    <property type="entry name" value="Lipocalins"/>
    <property type="match status" value="1"/>
</dbReference>
<dbReference type="PROSITE" id="PS00214">
    <property type="entry name" value="FABP"/>
    <property type="match status" value="1"/>
</dbReference>
<keyword id="KW-0963">Cytoplasm</keyword>
<keyword id="KW-0551">Lipid droplet</keyword>
<keyword id="KW-1185">Reference proteome</keyword>
<keyword id="KW-0683">Retinol-binding</keyword>
<keyword id="KW-0813">Transport</keyword>
<keyword id="KW-0845">Vitamin A</keyword>
<gene>
    <name type="primary">Rbp1</name>
    <name type="synonym">Crbpi</name>
    <name type="synonym">Rbp-1</name>
</gene>
<organism>
    <name type="scientific">Mus musculus</name>
    <name type="common">Mouse</name>
    <dbReference type="NCBI Taxonomy" id="10090"/>
    <lineage>
        <taxon>Eukaryota</taxon>
        <taxon>Metazoa</taxon>
        <taxon>Chordata</taxon>
        <taxon>Craniata</taxon>
        <taxon>Vertebrata</taxon>
        <taxon>Euteleostomi</taxon>
        <taxon>Mammalia</taxon>
        <taxon>Eutheria</taxon>
        <taxon>Euarchontoglires</taxon>
        <taxon>Glires</taxon>
        <taxon>Rodentia</taxon>
        <taxon>Myomorpha</taxon>
        <taxon>Muroidea</taxon>
        <taxon>Muridae</taxon>
        <taxon>Murinae</taxon>
        <taxon>Mus</taxon>
        <taxon>Mus</taxon>
    </lineage>
</organism>
<name>RET1_MOUSE</name>
<protein>
    <recommendedName>
        <fullName>Retinol-binding protein 1</fullName>
    </recommendedName>
    <alternativeName>
        <fullName>Cellular retinol-binding protein</fullName>
        <shortName>CRBP</shortName>
    </alternativeName>
    <alternativeName>
        <fullName>Cellular retinol-binding protein I</fullName>
        <shortName>CRBP-I</shortName>
        <shortName>mCRBPI</shortName>
    </alternativeName>
</protein>
<comment type="function">
    <text evidence="2 3 4">Cytoplasmic retinol-binding protein. Accepts retinol from the transport protein STRA6, and thereby contributes to retinol uptake, storage and retinoid homeostasis.</text>
</comment>
<comment type="subunit">
    <text evidence="1">Interacts (only as retinol-free apoprotein) with STRA6.</text>
</comment>
<comment type="subcellular location">
    <subcellularLocation>
        <location evidence="2">Cytoplasm</location>
    </subcellularLocation>
    <subcellularLocation>
        <location evidence="3">Lipid droplet</location>
    </subcellularLocation>
</comment>
<comment type="domain">
    <text evidence="1">Forms a beta-barrel structure that accommodates hydrophobic ligands in its interior.</text>
</comment>
<comment type="disruption phenotype">
    <text evidence="2 5">No visible phenotype when mice are kept on a vitamin A-enriched diet. Still, mutant mice have impaired vitamin A homeostasis. Four week old mice have reduced levels of retinoids in the liver, due to more rapid vitamin A turnover. When mice are kept on a vitamin A-deficient diet after weaning, they gain weight normally during the first 5 weeks, and then stop gaining weight. Their hepatic retinyl palmitate stores begin to decrease from the moment they are fed a vitamin A-deficient diet and become undetectable after 14 weeks, After this, serum retinol levels decrease rapidly and approach undetectable levels after 24 weeks on a vitamin A-deficient diet. After 23 weeks on a vitamin A-deficient diet, electroretinograms show dramatically decreased amplitudes of the a and b waves in response to light. At the same time, their eyes show impaired contact between the retinal pigment epithelium and the outer segment photoreceptors. Knockout mice exhibit memory deficits (PubMed:26030625).</text>
</comment>
<comment type="similarity">
    <text evidence="6">Belongs to the calycin superfamily. Fatty-acid binding protein (FABP) family.</text>
</comment>